<comment type="function">
    <text evidence="1">Catalyzes the conversion of glucosamine-6-phosphate to glucosamine-1-phosphate.</text>
</comment>
<comment type="catalytic activity">
    <reaction evidence="1">
        <text>alpha-D-glucosamine 1-phosphate = D-glucosamine 6-phosphate</text>
        <dbReference type="Rhea" id="RHEA:23424"/>
        <dbReference type="ChEBI" id="CHEBI:58516"/>
        <dbReference type="ChEBI" id="CHEBI:58725"/>
        <dbReference type="EC" id="5.4.2.10"/>
    </reaction>
</comment>
<comment type="cofactor">
    <cofactor evidence="1">
        <name>Mg(2+)</name>
        <dbReference type="ChEBI" id="CHEBI:18420"/>
    </cofactor>
    <text evidence="1">Binds 1 Mg(2+) ion per subunit.</text>
</comment>
<comment type="PTM">
    <text evidence="1">Activated by phosphorylation.</text>
</comment>
<comment type="similarity">
    <text evidence="1">Belongs to the phosphohexose mutase family.</text>
</comment>
<gene>
    <name evidence="1" type="primary">glmM</name>
    <name type="ordered locus">BUAPTUC7_375</name>
</gene>
<keyword id="KW-0413">Isomerase</keyword>
<keyword id="KW-0460">Magnesium</keyword>
<keyword id="KW-0479">Metal-binding</keyword>
<keyword id="KW-0597">Phosphoprotein</keyword>
<accession>B8D7R7</accession>
<dbReference type="EC" id="5.4.2.10" evidence="1"/>
<dbReference type="EMBL" id="CP001158">
    <property type="protein sequence ID" value="ACL30182.1"/>
    <property type="molecule type" value="Genomic_DNA"/>
</dbReference>
<dbReference type="RefSeq" id="WP_009874338.1">
    <property type="nucleotide sequence ID" value="NC_011834.1"/>
</dbReference>
<dbReference type="SMR" id="B8D7R7"/>
<dbReference type="KEGG" id="bau:BUAPTUC7_375"/>
<dbReference type="HOGENOM" id="CLU_016950_7_0_6"/>
<dbReference type="GO" id="GO:0005829">
    <property type="term" value="C:cytosol"/>
    <property type="evidence" value="ECO:0007669"/>
    <property type="project" value="TreeGrafter"/>
</dbReference>
<dbReference type="GO" id="GO:0000287">
    <property type="term" value="F:magnesium ion binding"/>
    <property type="evidence" value="ECO:0007669"/>
    <property type="project" value="UniProtKB-UniRule"/>
</dbReference>
<dbReference type="GO" id="GO:0008966">
    <property type="term" value="F:phosphoglucosamine mutase activity"/>
    <property type="evidence" value="ECO:0007669"/>
    <property type="project" value="UniProtKB-UniRule"/>
</dbReference>
<dbReference type="GO" id="GO:0004615">
    <property type="term" value="F:phosphomannomutase activity"/>
    <property type="evidence" value="ECO:0007669"/>
    <property type="project" value="TreeGrafter"/>
</dbReference>
<dbReference type="GO" id="GO:0005975">
    <property type="term" value="P:carbohydrate metabolic process"/>
    <property type="evidence" value="ECO:0007669"/>
    <property type="project" value="InterPro"/>
</dbReference>
<dbReference type="GO" id="GO:0009252">
    <property type="term" value="P:peptidoglycan biosynthetic process"/>
    <property type="evidence" value="ECO:0007669"/>
    <property type="project" value="TreeGrafter"/>
</dbReference>
<dbReference type="GO" id="GO:0006048">
    <property type="term" value="P:UDP-N-acetylglucosamine biosynthetic process"/>
    <property type="evidence" value="ECO:0007669"/>
    <property type="project" value="TreeGrafter"/>
</dbReference>
<dbReference type="CDD" id="cd05802">
    <property type="entry name" value="GlmM"/>
    <property type="match status" value="1"/>
</dbReference>
<dbReference type="FunFam" id="3.40.120.10:FF:000001">
    <property type="entry name" value="Phosphoglucosamine mutase"/>
    <property type="match status" value="1"/>
</dbReference>
<dbReference type="FunFam" id="3.40.120.10:FF:000003">
    <property type="entry name" value="Phosphoglucosamine mutase"/>
    <property type="match status" value="1"/>
</dbReference>
<dbReference type="Gene3D" id="3.40.120.10">
    <property type="entry name" value="Alpha-D-Glucose-1,6-Bisphosphate, subunit A, domain 3"/>
    <property type="match status" value="3"/>
</dbReference>
<dbReference type="Gene3D" id="3.30.310.50">
    <property type="entry name" value="Alpha-D-phosphohexomutase, C-terminal domain"/>
    <property type="match status" value="1"/>
</dbReference>
<dbReference type="HAMAP" id="MF_01554_B">
    <property type="entry name" value="GlmM_B"/>
    <property type="match status" value="1"/>
</dbReference>
<dbReference type="InterPro" id="IPR005844">
    <property type="entry name" value="A-D-PHexomutase_a/b/a-I"/>
</dbReference>
<dbReference type="InterPro" id="IPR016055">
    <property type="entry name" value="A-D-PHexomutase_a/b/a-I/II/III"/>
</dbReference>
<dbReference type="InterPro" id="IPR005845">
    <property type="entry name" value="A-D-PHexomutase_a/b/a-II"/>
</dbReference>
<dbReference type="InterPro" id="IPR005846">
    <property type="entry name" value="A-D-PHexomutase_a/b/a-III"/>
</dbReference>
<dbReference type="InterPro" id="IPR005843">
    <property type="entry name" value="A-D-PHexomutase_C"/>
</dbReference>
<dbReference type="InterPro" id="IPR036900">
    <property type="entry name" value="A-D-PHexomutase_C_sf"/>
</dbReference>
<dbReference type="InterPro" id="IPR016066">
    <property type="entry name" value="A-D-PHexomutase_CS"/>
</dbReference>
<dbReference type="InterPro" id="IPR005841">
    <property type="entry name" value="Alpha-D-phosphohexomutase_SF"/>
</dbReference>
<dbReference type="InterPro" id="IPR006352">
    <property type="entry name" value="GlmM_bact"/>
</dbReference>
<dbReference type="InterPro" id="IPR050060">
    <property type="entry name" value="Phosphoglucosamine_mutase"/>
</dbReference>
<dbReference type="NCBIfam" id="TIGR01455">
    <property type="entry name" value="glmM"/>
    <property type="match status" value="1"/>
</dbReference>
<dbReference type="NCBIfam" id="NF008139">
    <property type="entry name" value="PRK10887.1"/>
    <property type="match status" value="1"/>
</dbReference>
<dbReference type="PANTHER" id="PTHR42946:SF1">
    <property type="entry name" value="PHOSPHOGLUCOMUTASE (ALPHA-D-GLUCOSE-1,6-BISPHOSPHATE-DEPENDENT)"/>
    <property type="match status" value="1"/>
</dbReference>
<dbReference type="PANTHER" id="PTHR42946">
    <property type="entry name" value="PHOSPHOHEXOSE MUTASE"/>
    <property type="match status" value="1"/>
</dbReference>
<dbReference type="Pfam" id="PF02878">
    <property type="entry name" value="PGM_PMM_I"/>
    <property type="match status" value="1"/>
</dbReference>
<dbReference type="Pfam" id="PF02879">
    <property type="entry name" value="PGM_PMM_II"/>
    <property type="match status" value="1"/>
</dbReference>
<dbReference type="Pfam" id="PF02880">
    <property type="entry name" value="PGM_PMM_III"/>
    <property type="match status" value="1"/>
</dbReference>
<dbReference type="Pfam" id="PF00408">
    <property type="entry name" value="PGM_PMM_IV"/>
    <property type="match status" value="1"/>
</dbReference>
<dbReference type="PRINTS" id="PR00509">
    <property type="entry name" value="PGMPMM"/>
</dbReference>
<dbReference type="SUPFAM" id="SSF55957">
    <property type="entry name" value="Phosphoglucomutase, C-terminal domain"/>
    <property type="match status" value="1"/>
</dbReference>
<dbReference type="SUPFAM" id="SSF53738">
    <property type="entry name" value="Phosphoglucomutase, first 3 domains"/>
    <property type="match status" value="3"/>
</dbReference>
<dbReference type="PROSITE" id="PS00710">
    <property type="entry name" value="PGM_PMM"/>
    <property type="match status" value="1"/>
</dbReference>
<reference key="1">
    <citation type="journal article" date="2009" name="Science">
        <title>The dynamics and time scale of ongoing genomic erosion in symbiotic bacteria.</title>
        <authorList>
            <person name="Moran N.A."/>
            <person name="McLaughlin H.J."/>
            <person name="Sorek R."/>
        </authorList>
    </citation>
    <scope>NUCLEOTIDE SEQUENCE [LARGE SCALE GENOMIC DNA]</scope>
    <source>
        <strain>Tuc7</strain>
    </source>
</reference>
<organism>
    <name type="scientific">Buchnera aphidicola subsp. Acyrthosiphon pisum (strain Tuc7)</name>
    <dbReference type="NCBI Taxonomy" id="561501"/>
    <lineage>
        <taxon>Bacteria</taxon>
        <taxon>Pseudomonadati</taxon>
        <taxon>Pseudomonadota</taxon>
        <taxon>Gammaproteobacteria</taxon>
        <taxon>Enterobacterales</taxon>
        <taxon>Erwiniaceae</taxon>
        <taxon>Buchnera</taxon>
    </lineage>
</organism>
<protein>
    <recommendedName>
        <fullName evidence="1">Phosphoglucosamine mutase</fullName>
        <ecNumber evidence="1">5.4.2.10</ecNumber>
    </recommendedName>
</protein>
<proteinExistence type="inferred from homology"/>
<name>GLMM_BUCAT</name>
<feature type="chain" id="PRO_1000185356" description="Phosphoglucosamine mutase">
    <location>
        <begin position="1"/>
        <end position="444"/>
    </location>
</feature>
<feature type="active site" description="Phosphoserine intermediate" evidence="1">
    <location>
        <position position="102"/>
    </location>
</feature>
<feature type="binding site" description="via phosphate group" evidence="1">
    <location>
        <position position="102"/>
    </location>
    <ligand>
        <name>Mg(2+)</name>
        <dbReference type="ChEBI" id="CHEBI:18420"/>
    </ligand>
</feature>
<feature type="binding site" evidence="1">
    <location>
        <position position="241"/>
    </location>
    <ligand>
        <name>Mg(2+)</name>
        <dbReference type="ChEBI" id="CHEBI:18420"/>
    </ligand>
</feature>
<feature type="binding site" evidence="1">
    <location>
        <position position="243"/>
    </location>
    <ligand>
        <name>Mg(2+)</name>
        <dbReference type="ChEBI" id="CHEBI:18420"/>
    </ligand>
</feature>
<feature type="binding site" evidence="1">
    <location>
        <position position="245"/>
    </location>
    <ligand>
        <name>Mg(2+)</name>
        <dbReference type="ChEBI" id="CHEBI:18420"/>
    </ligand>
</feature>
<feature type="modified residue" description="Phosphoserine" evidence="1">
    <location>
        <position position="102"/>
    </location>
</feature>
<sequence length="444" mass="49359">MTFLQYFKTDGIRGKVGVNPITPDFLLKLGWSIGIVLGKNKTQKIIIGRDTRISGTMLQSILEFGILSTGVSTLLAGCMPTSAISYFTKSLNASAGIVISGSHNPFYDNGIKIFYKNGVKLTKEIEFSIEQKVQHTFLYPDYVNFGHSNNILDPESLYIDFCKKNFPKDLNLSKFTIILDCANGATFKIAPKIFEDLGARVITVAINPNGVNINQNSGSTNILMLKKIVLSESADLGLAFDGDGDRVIMVDHLGNQVDGDQIIYIIAKEYLKENKLKGGVVGTSMTNMGVILGLKKLGIPFCPAQIGDRNVYEKIKEKKWILGAEKSGHIVLLDKHSTGDGIIASLQVLLTMINNHMTLYDLSNQIKLFPQVFLNIFLKQDKDFEKDIKIQNILTQYKNILGQNSRVLVRRSGTEPCIRIMVEGEDYLKVYELAQYIGKTIKLL</sequence>
<evidence type="ECO:0000255" key="1">
    <source>
        <dbReference type="HAMAP-Rule" id="MF_01554"/>
    </source>
</evidence>